<proteinExistence type="evidence at transcript level"/>
<sequence length="393" mass="44785">MATAQLQRTSMSALIFPNKISTEQQSLVLVKRLLAVSVSCITYLRGIFPECAYGTRYLDDLCVKILREDKNCPGSTQLVKWMLGCYDALHKKYLRMVVLAVYTNPEDPQTISECYQFKFKYTSNGPVMDFTSKNQSNEPNMSSADTKKASILLIRKIYILMQNLGPLPNDVCLTMKLFYYDEVTPPDYQPPGFKDGDCEGVIFEGEPMYLNVGEVPTPFHTFKVKVTTERERMENIGSGILSPKQLKTPLQKILTDKDDLEDDQEHYISDEFDTETKMEEQEKNPGCSVRREAGFICEEDEMKSKGSPDFSISHSQVEQLVSKTSELDVSESKTRSGKIFQNKMANGNQQVKSKENRKRTQLESGKTVLHPFDSSSQESVPKRRKFSEPKERI</sequence>
<organism>
    <name type="scientific">Bos taurus</name>
    <name type="common">Bovine</name>
    <dbReference type="NCBI Taxonomy" id="9913"/>
    <lineage>
        <taxon>Eukaryota</taxon>
        <taxon>Metazoa</taxon>
        <taxon>Chordata</taxon>
        <taxon>Craniata</taxon>
        <taxon>Vertebrata</taxon>
        <taxon>Euteleostomi</taxon>
        <taxon>Mammalia</taxon>
        <taxon>Eutheria</taxon>
        <taxon>Laurasiatheria</taxon>
        <taxon>Artiodactyla</taxon>
        <taxon>Ruminantia</taxon>
        <taxon>Pecora</taxon>
        <taxon>Bovidae</taxon>
        <taxon>Bovinae</taxon>
        <taxon>Bos</taxon>
    </lineage>
</organism>
<keyword id="KW-0158">Chromosome</keyword>
<keyword id="KW-0221">Differentiation</keyword>
<keyword id="KW-0469">Meiosis</keyword>
<keyword id="KW-0539">Nucleus</keyword>
<keyword id="KW-0896">Oogenesis</keyword>
<keyword id="KW-0597">Phosphoprotein</keyword>
<keyword id="KW-1185">Reference proteome</keyword>
<keyword id="KW-0744">Spermatogenesis</keyword>
<evidence type="ECO:0000250" key="1"/>
<evidence type="ECO:0000250" key="2">
    <source>
        <dbReference type="UniProtKB" id="Q9D5T7"/>
    </source>
</evidence>
<evidence type="ECO:0000255" key="3">
    <source>
        <dbReference type="PROSITE-ProRule" id="PRU00109"/>
    </source>
</evidence>
<evidence type="ECO:0000256" key="4">
    <source>
        <dbReference type="SAM" id="MobiDB-lite"/>
    </source>
</evidence>
<evidence type="ECO:0000305" key="5"/>
<protein>
    <recommendedName>
        <fullName>HORMA domain-containing protein 1</fullName>
    </recommendedName>
</protein>
<feature type="chain" id="PRO_0000410911" description="HORMA domain-containing protein 1">
    <location>
        <begin position="1"/>
        <end position="393"/>
    </location>
</feature>
<feature type="domain" description="HORMA" evidence="3">
    <location>
        <begin position="24"/>
        <end position="226"/>
    </location>
</feature>
<feature type="region of interest" description="Disordered" evidence="4">
    <location>
        <begin position="322"/>
        <end position="393"/>
    </location>
</feature>
<feature type="short sequence motif" description="Nuclear localization signal" evidence="1">
    <location>
        <begin position="382"/>
        <end position="385"/>
    </location>
</feature>
<feature type="compositionally biased region" description="Basic and acidic residues" evidence="4">
    <location>
        <begin position="352"/>
        <end position="361"/>
    </location>
</feature>
<feature type="modified residue" description="Phosphoserine" evidence="2">
    <location>
        <position position="375"/>
    </location>
</feature>
<feature type="sequence conflict" description="In Ref. 2; AAI12461." evidence="5" ref="2">
    <original>C</original>
    <variation>S</variation>
    <location>
        <position position="62"/>
    </location>
</feature>
<accession>Q2KIY6</accession>
<name>HORM1_BOVIN</name>
<comment type="function">
    <text evidence="2">Plays a key role in meiotic progression. Regulates 3 different functions during meiosis: ensures that sufficient numbers of processed DNA double-strand breaks (DSBs) are available for successful homology search by increasing the steady-state numbers of single-stranded DSB ends. Promotes synaptonemal-complex formation independently of its role in homology search. Plays a key role in the male mid-pachytene checkpoint and the female meiotic prophase checkpoint: required for efficient build-up of ATR activity on unsynapsed chromosome regions, a process believed to form the basis of meiotic silencing of unsynapsed chromatin (MSUC) and meiotic prophase quality control in both sexes.</text>
</comment>
<comment type="subunit">
    <text evidence="2">Interacts with HORMAD2. Interacts with IHO1.</text>
</comment>
<comment type="subcellular location">
    <subcellularLocation>
        <location evidence="2">Nucleus</location>
    </subcellularLocation>
    <subcellularLocation>
        <location evidence="2">Chromosome</location>
    </subcellularLocation>
    <text evidence="2">Preferentially localizes to unsynapsed or desynapsed chromosomal regions during the prophase I stage of meiosis. TRIP13 is required for depletion from synapsed chromosomes. The expression of the phosphorylated form at Ser-376 is restricted to unsynapsed chromosomal regions (By similarity).</text>
</comment>
<comment type="PTM">
    <text evidence="2">Phosphorylated at Ser-376 in a SPO11-dependent manner.</text>
</comment>
<comment type="sequence caution" evidence="5">
    <conflict type="frameshift">
        <sequence resource="EMBL-CDS" id="AAI12461"/>
    </conflict>
</comment>
<gene>
    <name type="primary">HORMAD1</name>
</gene>
<reference key="1">
    <citation type="journal article" date="2009" name="Science">
        <title>The genome sequence of taurine cattle: a window to ruminant biology and evolution.</title>
        <authorList>
            <consortium name="The bovine genome sequencing and analysis consortium"/>
        </authorList>
    </citation>
    <scope>NUCLEOTIDE SEQUENCE [LARGE SCALE GENOMIC DNA]</scope>
    <source>
        <strain>Hereford</strain>
    </source>
</reference>
<reference key="2">
    <citation type="submission" date="2006-01" db="EMBL/GenBank/DDBJ databases">
        <authorList>
            <consortium name="NIH - Mammalian Gene Collection (MGC) project"/>
        </authorList>
    </citation>
    <scope>NUCLEOTIDE SEQUENCE [LARGE SCALE MRNA]</scope>
    <source>
        <strain>Crossbred X Angus</strain>
        <tissue>Liver</tissue>
    </source>
</reference>
<dbReference type="EMBL" id="AAFC03030055">
    <property type="status" value="NOT_ANNOTATED_CDS"/>
    <property type="molecule type" value="Genomic_DNA"/>
</dbReference>
<dbReference type="EMBL" id="BC112460">
    <property type="protein sequence ID" value="AAI12461.1"/>
    <property type="status" value="ALT_FRAME"/>
    <property type="molecule type" value="mRNA"/>
</dbReference>
<dbReference type="RefSeq" id="NP_001039770.2">
    <property type="nucleotide sequence ID" value="NM_001046305.2"/>
</dbReference>
<dbReference type="SMR" id="Q2KIY6"/>
<dbReference type="FunCoup" id="Q2KIY6">
    <property type="interactions" value="34"/>
</dbReference>
<dbReference type="STRING" id="9913.ENSBTAP00000003530"/>
<dbReference type="PaxDb" id="9913-ENSBTAP00000003529"/>
<dbReference type="Ensembl" id="ENSBTAT00000003529.5">
    <property type="protein sequence ID" value="ENSBTAP00000003529.4"/>
    <property type="gene ID" value="ENSBTAG00000002724.7"/>
</dbReference>
<dbReference type="GeneID" id="529615"/>
<dbReference type="KEGG" id="bta:529615"/>
<dbReference type="CTD" id="84072"/>
<dbReference type="VEuPathDB" id="HostDB:ENSBTAG00000002724"/>
<dbReference type="VGNC" id="VGNC:55235">
    <property type="gene designation" value="HORMAD1"/>
</dbReference>
<dbReference type="eggNOG" id="KOG4652">
    <property type="taxonomic scope" value="Eukaryota"/>
</dbReference>
<dbReference type="GeneTree" id="ENSGT00390000018130"/>
<dbReference type="HOGENOM" id="CLU_058638_1_0_1"/>
<dbReference type="InParanoid" id="Q2KIY6"/>
<dbReference type="OMA" id="IFQNKMV"/>
<dbReference type="OrthoDB" id="1928087at2759"/>
<dbReference type="TreeFam" id="TF313989"/>
<dbReference type="Proteomes" id="UP000009136">
    <property type="component" value="Chromosome 3"/>
</dbReference>
<dbReference type="Bgee" id="ENSBTAG00000002724">
    <property type="expression patterns" value="Expressed in spermatid and 42 other cell types or tissues"/>
</dbReference>
<dbReference type="GO" id="GO:0005694">
    <property type="term" value="C:chromosome"/>
    <property type="evidence" value="ECO:0000250"/>
    <property type="project" value="UniProtKB"/>
</dbReference>
<dbReference type="GO" id="GO:0005634">
    <property type="term" value="C:nucleus"/>
    <property type="evidence" value="ECO:0000250"/>
    <property type="project" value="UniProtKB"/>
</dbReference>
<dbReference type="GO" id="GO:0000795">
    <property type="term" value="C:synaptonemal complex"/>
    <property type="evidence" value="ECO:0007669"/>
    <property type="project" value="Ensembl"/>
</dbReference>
<dbReference type="GO" id="GO:0001824">
    <property type="term" value="P:blastocyst development"/>
    <property type="evidence" value="ECO:0000250"/>
    <property type="project" value="UniProtKB"/>
</dbReference>
<dbReference type="GO" id="GO:0051321">
    <property type="term" value="P:meiotic cell cycle"/>
    <property type="evidence" value="ECO:0000250"/>
    <property type="project" value="UniProtKB"/>
</dbReference>
<dbReference type="GO" id="GO:0042138">
    <property type="term" value="P:meiotic DNA double-strand break formation"/>
    <property type="evidence" value="ECO:0000250"/>
    <property type="project" value="UniProtKB"/>
</dbReference>
<dbReference type="GO" id="GO:0051598">
    <property type="term" value="P:meiotic recombination checkpoint signaling"/>
    <property type="evidence" value="ECO:0000250"/>
    <property type="project" value="UniProtKB"/>
</dbReference>
<dbReference type="GO" id="GO:0051177">
    <property type="term" value="P:meiotic sister chromatid cohesion"/>
    <property type="evidence" value="ECO:0000250"/>
    <property type="project" value="UniProtKB"/>
</dbReference>
<dbReference type="GO" id="GO:0048477">
    <property type="term" value="P:oogenesis"/>
    <property type="evidence" value="ECO:0000250"/>
    <property type="project" value="UniProtKB"/>
</dbReference>
<dbReference type="GO" id="GO:0060629">
    <property type="term" value="P:regulation of homologous chromosome segregation"/>
    <property type="evidence" value="ECO:0000250"/>
    <property type="project" value="UniProtKB"/>
</dbReference>
<dbReference type="GO" id="GO:0007283">
    <property type="term" value="P:spermatogenesis"/>
    <property type="evidence" value="ECO:0000250"/>
    <property type="project" value="UniProtKB"/>
</dbReference>
<dbReference type="GO" id="GO:0007130">
    <property type="term" value="P:synaptonemal complex assembly"/>
    <property type="evidence" value="ECO:0000250"/>
    <property type="project" value="UniProtKB"/>
</dbReference>
<dbReference type="FunFam" id="3.30.900.10:FF:000006">
    <property type="entry name" value="HORMA domain-containing protein 1"/>
    <property type="match status" value="1"/>
</dbReference>
<dbReference type="Gene3D" id="3.30.900.10">
    <property type="entry name" value="HORMA domain"/>
    <property type="match status" value="1"/>
</dbReference>
<dbReference type="InterPro" id="IPR003511">
    <property type="entry name" value="HORMA_dom"/>
</dbReference>
<dbReference type="InterPro" id="IPR036570">
    <property type="entry name" value="HORMA_dom_sf"/>
</dbReference>
<dbReference type="InterPro" id="IPR051294">
    <property type="entry name" value="HORMA_MeioticProgression"/>
</dbReference>
<dbReference type="PANTHER" id="PTHR48225">
    <property type="entry name" value="HORMA DOMAIN-CONTAINING PROTEIN 1"/>
    <property type="match status" value="1"/>
</dbReference>
<dbReference type="PANTHER" id="PTHR48225:SF1">
    <property type="entry name" value="HORMA DOMAIN-CONTAINING PROTEIN 1"/>
    <property type="match status" value="1"/>
</dbReference>
<dbReference type="Pfam" id="PF02301">
    <property type="entry name" value="HORMA"/>
    <property type="match status" value="1"/>
</dbReference>
<dbReference type="SUPFAM" id="SSF56019">
    <property type="entry name" value="The spindle assembly checkpoint protein mad2"/>
    <property type="match status" value="1"/>
</dbReference>
<dbReference type="PROSITE" id="PS50815">
    <property type="entry name" value="HORMA"/>
    <property type="match status" value="1"/>
</dbReference>